<protein>
    <recommendedName>
        <fullName evidence="1">UPF0173 metal-dependent hydrolase PH1671</fullName>
    </recommendedName>
</protein>
<reference key="1">
    <citation type="journal article" date="1998" name="DNA Res.">
        <title>Complete sequence and gene organization of the genome of a hyper-thermophilic archaebacterium, Pyrococcus horikoshii OT3.</title>
        <authorList>
            <person name="Kawarabayasi Y."/>
            <person name="Sawada M."/>
            <person name="Horikawa H."/>
            <person name="Haikawa Y."/>
            <person name="Hino Y."/>
            <person name="Yamamoto S."/>
            <person name="Sekine M."/>
            <person name="Baba S."/>
            <person name="Kosugi H."/>
            <person name="Hosoyama A."/>
            <person name="Nagai Y."/>
            <person name="Sakai M."/>
            <person name="Ogura K."/>
            <person name="Otsuka R."/>
            <person name="Nakazawa H."/>
            <person name="Takamiya M."/>
            <person name="Ohfuku Y."/>
            <person name="Funahashi T."/>
            <person name="Tanaka T."/>
            <person name="Kudoh Y."/>
            <person name="Yamazaki J."/>
            <person name="Kushida N."/>
            <person name="Oguchi A."/>
            <person name="Aoki K."/>
            <person name="Yoshizawa T."/>
            <person name="Nakamura Y."/>
            <person name="Robb F.T."/>
            <person name="Horikoshi K."/>
            <person name="Masuchi Y."/>
            <person name="Shizuya H."/>
            <person name="Kikuchi H."/>
        </authorList>
    </citation>
    <scope>NUCLEOTIDE SEQUENCE [LARGE SCALE GENOMIC DNA]</scope>
    <source>
        <strain>ATCC 700860 / DSM 12428 / JCM 9974 / NBRC 100139 / OT-3</strain>
    </source>
</reference>
<evidence type="ECO:0000255" key="1">
    <source>
        <dbReference type="HAMAP-Rule" id="MF_00457"/>
    </source>
</evidence>
<evidence type="ECO:0000305" key="2"/>
<proteinExistence type="inferred from homology"/>
<name>Y1671_PYRHO</name>
<accession>O59330</accession>
<organism>
    <name type="scientific">Pyrococcus horikoshii (strain ATCC 700860 / DSM 12428 / JCM 9974 / NBRC 100139 / OT-3)</name>
    <dbReference type="NCBI Taxonomy" id="70601"/>
    <lineage>
        <taxon>Archaea</taxon>
        <taxon>Methanobacteriati</taxon>
        <taxon>Methanobacteriota</taxon>
        <taxon>Thermococci</taxon>
        <taxon>Thermococcales</taxon>
        <taxon>Thermococcaceae</taxon>
        <taxon>Pyrococcus</taxon>
    </lineage>
</organism>
<feature type="chain" id="PRO_0000156402" description="UPF0173 metal-dependent hydrolase PH1671">
    <location>
        <begin position="1"/>
        <end position="225"/>
    </location>
</feature>
<sequence>MVKVKFLGHAAFYIEGSKKILIDPFLTGNPQAAARPEDFKDVDLILVTHAHGDHLGDAGEIARISGAKIVAMYDLANYISEKYKDVETIGMNYGPTEIDGVFIVQVPAWHSSSDGKYSIGNPSGYIVKLDDVTIYHAGDTYVFKDMELFAELYGPIDVALLPIGGHFTMGVREAAKAVELLKPRKVVPMHYNTWPPISADPEEFKRLVGDKAEVVILKPGEELKL</sequence>
<comment type="similarity">
    <text evidence="1">Belongs to the UPF0173 family.</text>
</comment>
<comment type="sequence caution" evidence="2">
    <conflict type="erroneous initiation">
        <sequence resource="EMBL-CDS" id="BAA30783"/>
    </conflict>
</comment>
<keyword id="KW-0378">Hydrolase</keyword>
<gene>
    <name type="ordered locus">PH1671</name>
</gene>
<dbReference type="EMBL" id="BA000001">
    <property type="protein sequence ID" value="BAA30783.1"/>
    <property type="status" value="ALT_INIT"/>
    <property type="molecule type" value="Genomic_DNA"/>
</dbReference>
<dbReference type="PIR" id="G71047">
    <property type="entry name" value="G71047"/>
</dbReference>
<dbReference type="RefSeq" id="WP_048053453.1">
    <property type="nucleotide sequence ID" value="NC_000961.1"/>
</dbReference>
<dbReference type="SMR" id="O59330"/>
<dbReference type="EnsemblBacteria" id="BAA30783">
    <property type="protein sequence ID" value="BAA30783"/>
    <property type="gene ID" value="BAA30783"/>
</dbReference>
<dbReference type="GeneID" id="1442518"/>
<dbReference type="KEGG" id="pho:PH1671"/>
<dbReference type="eggNOG" id="arCOG00497">
    <property type="taxonomic scope" value="Archaea"/>
</dbReference>
<dbReference type="OrthoDB" id="28313at2157"/>
<dbReference type="Proteomes" id="UP000000752">
    <property type="component" value="Chromosome"/>
</dbReference>
<dbReference type="GO" id="GO:0016787">
    <property type="term" value="F:hydrolase activity"/>
    <property type="evidence" value="ECO:0007669"/>
    <property type="project" value="UniProtKB-UniRule"/>
</dbReference>
<dbReference type="Gene3D" id="3.60.15.10">
    <property type="entry name" value="Ribonuclease Z/Hydroxyacylglutathione hydrolase-like"/>
    <property type="match status" value="1"/>
</dbReference>
<dbReference type="HAMAP" id="MF_00457">
    <property type="entry name" value="UPF0173"/>
    <property type="match status" value="1"/>
</dbReference>
<dbReference type="InterPro" id="IPR001279">
    <property type="entry name" value="Metallo-B-lactamas"/>
</dbReference>
<dbReference type="InterPro" id="IPR036866">
    <property type="entry name" value="RibonucZ/Hydroxyglut_hydro"/>
</dbReference>
<dbReference type="InterPro" id="IPR022877">
    <property type="entry name" value="UPF0173"/>
</dbReference>
<dbReference type="InterPro" id="IPR050114">
    <property type="entry name" value="UPF0173_UPF0282_UlaG_hydrolase"/>
</dbReference>
<dbReference type="NCBIfam" id="NF001911">
    <property type="entry name" value="PRK00685.1"/>
    <property type="match status" value="1"/>
</dbReference>
<dbReference type="PANTHER" id="PTHR43546:SF3">
    <property type="entry name" value="UPF0173 METAL-DEPENDENT HYDROLASE MJ1163"/>
    <property type="match status" value="1"/>
</dbReference>
<dbReference type="PANTHER" id="PTHR43546">
    <property type="entry name" value="UPF0173 METAL-DEPENDENT HYDROLASE MJ1163-RELATED"/>
    <property type="match status" value="1"/>
</dbReference>
<dbReference type="Pfam" id="PF13483">
    <property type="entry name" value="Lactamase_B_3"/>
    <property type="match status" value="1"/>
</dbReference>
<dbReference type="SMART" id="SM00849">
    <property type="entry name" value="Lactamase_B"/>
    <property type="match status" value="1"/>
</dbReference>
<dbReference type="SUPFAM" id="SSF56281">
    <property type="entry name" value="Metallo-hydrolase/oxidoreductase"/>
    <property type="match status" value="1"/>
</dbReference>